<reference key="1">
    <citation type="journal article" date="1990" name="J. Biol. Chem.">
        <title>Characterization of the lactose-specific enzymes of the phosphotransferase system in Lactococcus lactis.</title>
        <authorList>
            <person name="de Vos W.M."/>
            <person name="Boerrigter I.J."/>
            <person name="van Rooyen R.J."/>
            <person name="Reiche B."/>
            <person name="Hengstenberg W."/>
        </authorList>
    </citation>
    <scope>NUCLEOTIDE SEQUENCE [GENOMIC DNA]</scope>
    <scope>OPERON STRUCTURE</scope>
    <scope>INDUCTION</scope>
    <source>
        <strain>MG1820</strain>
    </source>
</reference>
<evidence type="ECO:0000269" key="1">
    <source>
    </source>
</evidence>
<name>LACXP_LACLL</name>
<accession>P23496</accession>
<comment type="induction">
    <text evidence="1">By lactose. The operon consists of lacABCDFEGX.</text>
</comment>
<comment type="miscellaneous">
    <text>This gene was sequenced from pMG820, a laboratory-derived deletion of the naturally occurring plasmid pLP712.</text>
</comment>
<gene>
    <name type="primary">lacX</name>
</gene>
<geneLocation type="plasmid">
    <name>pLP712</name>
</geneLocation>
<sequence>MTIELKNEYLTVQFKTLGGQLTSIKDKDGLEYLWQADPEYWNGQAPILFPICGSLRNDWAIYRPQERPFFTGLIRRHGFVRKEEFTLEEVNENSVTFSIKPNAEMLDNYLYQFELRVVYTLNGKSIRTEFQVTNLETEKTMPYFIGAHPAFNCPLVEGEKYEDYSLEFSEVESCSIPKSFPETGLLDLQDRTPFLENQKSLDLDYSLFSHDAITLDRLKSRSVTLRSRKSGKGLRVDFDDFPNLILWSTTNKSPFIALEPWSGLSTSLEEGNILEDKPQVTKVLPLDTSKKSYDITILN</sequence>
<organism>
    <name type="scientific">Lactococcus lactis subsp. lactis</name>
    <name type="common">Streptococcus lactis</name>
    <dbReference type="NCBI Taxonomy" id="1360"/>
    <lineage>
        <taxon>Bacteria</taxon>
        <taxon>Bacillati</taxon>
        <taxon>Bacillota</taxon>
        <taxon>Bacilli</taxon>
        <taxon>Lactobacillales</taxon>
        <taxon>Streptococcaceae</taxon>
        <taxon>Lactococcus</taxon>
    </lineage>
</organism>
<proteinExistence type="evidence at transcript level"/>
<feature type="chain" id="PRO_0000084348" description="Protein LacX, plasmid">
    <location>
        <begin position="1"/>
        <end position="299"/>
    </location>
</feature>
<protein>
    <recommendedName>
        <fullName>Protein LacX, plasmid</fullName>
    </recommendedName>
</protein>
<keyword id="KW-0614">Plasmid</keyword>
<dbReference type="EMBL" id="M60447">
    <property type="protein sequence ID" value="AAA25184.1"/>
    <property type="molecule type" value="Genomic_DNA"/>
</dbReference>
<dbReference type="PIR" id="D23696">
    <property type="entry name" value="D23696"/>
</dbReference>
<dbReference type="RefSeq" id="WP_015063505.1">
    <property type="nucleotide sequence ID" value="NZ_CP086084.1"/>
</dbReference>
<dbReference type="SMR" id="P23496"/>
<dbReference type="GO" id="GO:0030246">
    <property type="term" value="F:carbohydrate binding"/>
    <property type="evidence" value="ECO:0007669"/>
    <property type="project" value="InterPro"/>
</dbReference>
<dbReference type="GO" id="GO:0016853">
    <property type="term" value="F:isomerase activity"/>
    <property type="evidence" value="ECO:0007669"/>
    <property type="project" value="InterPro"/>
</dbReference>
<dbReference type="GO" id="GO:0005975">
    <property type="term" value="P:carbohydrate metabolic process"/>
    <property type="evidence" value="ECO:0007669"/>
    <property type="project" value="InterPro"/>
</dbReference>
<dbReference type="CDD" id="cd09024">
    <property type="entry name" value="Aldose_epim_lacX"/>
    <property type="match status" value="1"/>
</dbReference>
<dbReference type="Gene3D" id="2.70.98.10">
    <property type="match status" value="1"/>
</dbReference>
<dbReference type="InterPro" id="IPR008183">
    <property type="entry name" value="Aldose_1/G6P_1-epimerase"/>
</dbReference>
<dbReference type="InterPro" id="IPR011013">
    <property type="entry name" value="Gal_mutarotase_sf_dom"/>
</dbReference>
<dbReference type="InterPro" id="IPR014718">
    <property type="entry name" value="GH-type_carb-bd"/>
</dbReference>
<dbReference type="InterPro" id="IPR037481">
    <property type="entry name" value="LacX"/>
</dbReference>
<dbReference type="PANTHER" id="PTHR11122">
    <property type="entry name" value="APOSPORY-ASSOCIATED PROTEIN C-RELATED"/>
    <property type="match status" value="1"/>
</dbReference>
<dbReference type="PANTHER" id="PTHR11122:SF13">
    <property type="entry name" value="GLUCOSE-6-PHOSPHATE 1-EPIMERASE"/>
    <property type="match status" value="1"/>
</dbReference>
<dbReference type="Pfam" id="PF01263">
    <property type="entry name" value="Aldose_epim"/>
    <property type="match status" value="1"/>
</dbReference>
<dbReference type="SUPFAM" id="SSF74650">
    <property type="entry name" value="Galactose mutarotase-like"/>
    <property type="match status" value="1"/>
</dbReference>